<sequence>MIIKVRVIPNSKRNEVVSRVGSILRVKITAPAIEGRANEELCDFLSDFFDVKRSMIFLRKGERGREKTIEVLGRLEEELNEVLDTIP</sequence>
<gene>
    <name type="ordered locus">TGRD_618</name>
</gene>
<proteinExistence type="inferred from homology"/>
<comment type="similarity">
    <text evidence="1">Belongs to the UPF0235 family.</text>
</comment>
<accession>B1GYK8</accession>
<name>Y618_ENDTX</name>
<protein>
    <recommendedName>
        <fullName evidence="1">UPF0235 protein TGRD_618</fullName>
    </recommendedName>
</protein>
<reference key="1">
    <citation type="journal article" date="2008" name="Proc. Natl. Acad. Sci. U.S.A.">
        <title>Complete genome of the uncultured termite group 1 bacteria in a single host protist cell.</title>
        <authorList>
            <person name="Hongoh Y."/>
            <person name="Sharma V.K."/>
            <person name="Prakash T."/>
            <person name="Noda S."/>
            <person name="Taylor T.D."/>
            <person name="Kudo T."/>
            <person name="Sakaki Y."/>
            <person name="Toyoda A."/>
            <person name="Hattori M."/>
            <person name="Ohkuma M."/>
        </authorList>
    </citation>
    <scope>NUCLEOTIDE SEQUENCE [LARGE SCALE GENOMIC DNA]</scope>
</reference>
<organism>
    <name type="scientific">Endomicrobium trichonymphae</name>
    <dbReference type="NCBI Taxonomy" id="1408204"/>
    <lineage>
        <taxon>Bacteria</taxon>
        <taxon>Pseudomonadati</taxon>
        <taxon>Elusimicrobiota</taxon>
        <taxon>Endomicrobiia</taxon>
        <taxon>Endomicrobiales</taxon>
        <taxon>Endomicrobiaceae</taxon>
        <taxon>Candidatus Endomicrobiellum</taxon>
    </lineage>
</organism>
<dbReference type="EMBL" id="AP009510">
    <property type="protein sequence ID" value="BAG14101.1"/>
    <property type="molecule type" value="Genomic_DNA"/>
</dbReference>
<dbReference type="RefSeq" id="WP_015423625.1">
    <property type="nucleotide sequence ID" value="NC_020419.1"/>
</dbReference>
<dbReference type="SMR" id="B1GYK8"/>
<dbReference type="STRING" id="471821.TGRD_618"/>
<dbReference type="KEGG" id="eti:RSTT_580"/>
<dbReference type="KEGG" id="rsd:TGRD_618"/>
<dbReference type="HOGENOM" id="CLU_130694_6_2_0"/>
<dbReference type="OrthoDB" id="9813317at2"/>
<dbReference type="Proteomes" id="UP000001691">
    <property type="component" value="Chromosome"/>
</dbReference>
<dbReference type="GO" id="GO:0005737">
    <property type="term" value="C:cytoplasm"/>
    <property type="evidence" value="ECO:0007669"/>
    <property type="project" value="TreeGrafter"/>
</dbReference>
<dbReference type="Gene3D" id="3.30.1200.10">
    <property type="entry name" value="YggU-like"/>
    <property type="match status" value="1"/>
</dbReference>
<dbReference type="HAMAP" id="MF_00634">
    <property type="entry name" value="UPF0235"/>
    <property type="match status" value="1"/>
</dbReference>
<dbReference type="InterPro" id="IPR003746">
    <property type="entry name" value="DUF167"/>
</dbReference>
<dbReference type="InterPro" id="IPR036591">
    <property type="entry name" value="YggU-like_sf"/>
</dbReference>
<dbReference type="NCBIfam" id="TIGR00251">
    <property type="entry name" value="DUF167 family protein"/>
    <property type="match status" value="1"/>
</dbReference>
<dbReference type="PANTHER" id="PTHR13420">
    <property type="entry name" value="UPF0235 PROTEIN C15ORF40"/>
    <property type="match status" value="1"/>
</dbReference>
<dbReference type="PANTHER" id="PTHR13420:SF7">
    <property type="entry name" value="UPF0235 PROTEIN C15ORF40"/>
    <property type="match status" value="1"/>
</dbReference>
<dbReference type="Pfam" id="PF02594">
    <property type="entry name" value="DUF167"/>
    <property type="match status" value="1"/>
</dbReference>
<dbReference type="SMART" id="SM01152">
    <property type="entry name" value="DUF167"/>
    <property type="match status" value="1"/>
</dbReference>
<dbReference type="SUPFAM" id="SSF69786">
    <property type="entry name" value="YggU-like"/>
    <property type="match status" value="1"/>
</dbReference>
<evidence type="ECO:0000255" key="1">
    <source>
        <dbReference type="HAMAP-Rule" id="MF_00634"/>
    </source>
</evidence>
<feature type="chain" id="PRO_1000147346" description="UPF0235 protein TGRD_618">
    <location>
        <begin position="1"/>
        <end position="87"/>
    </location>
</feature>